<protein>
    <recommendedName>
        <fullName>Xylose isomerase</fullName>
        <ecNumber>5.3.1.5</ecNumber>
    </recommendedName>
</protein>
<reference key="1">
    <citation type="patent" date="1990-01-17" number="EP0351029">
        <title>Novel glucose isomerase enzymes and their use.</title>
        <authorList>
            <person name="Luiten R.G.M."/>
            <person name="Quax W.J."/>
            <person name="Schuurhuizen P.W."/>
            <person name="Mrabet N."/>
        </authorList>
    </citation>
    <scope>NUCLEOTIDE SEQUENCE [GENOMIC DNA]</scope>
</reference>
<reference key="2">
    <citation type="journal article" date="1994" name="Acta Crystallogr. D">
        <title>Structure determination of glucose isomerase from Streptomyces murinus at 2.6-A resolution.</title>
        <authorList>
            <person name="Rasmussen H."/>
            <person name="la Cour T."/>
            <person name="Nyborg J."/>
            <person name="Schuelein M."/>
        </authorList>
    </citation>
    <scope>X-RAY CRYSTALLOGRAPHY (2.6 ANGSTROMS)</scope>
</reference>
<name>XYLA_STRMR</name>
<accession>P37031</accession>
<feature type="chain" id="PRO_0000195801" description="Xylose isomerase">
    <location>
        <begin position="1"/>
        <end position="388"/>
    </location>
</feature>
<feature type="active site" evidence="1">
    <location>
        <position position="54"/>
    </location>
</feature>
<feature type="active site" evidence="1">
    <location>
        <position position="57"/>
    </location>
</feature>
<feature type="binding site">
    <location>
        <position position="181"/>
    </location>
    <ligand>
        <name>Mg(2+)</name>
        <dbReference type="ChEBI" id="CHEBI:18420"/>
        <label>1</label>
    </ligand>
</feature>
<feature type="binding site">
    <location>
        <position position="217"/>
    </location>
    <ligand>
        <name>Mg(2+)</name>
        <dbReference type="ChEBI" id="CHEBI:18420"/>
        <label>1</label>
    </ligand>
</feature>
<feature type="binding site">
    <location>
        <position position="217"/>
    </location>
    <ligand>
        <name>Mg(2+)</name>
        <dbReference type="ChEBI" id="CHEBI:18420"/>
        <label>2</label>
    </ligand>
</feature>
<feature type="binding site">
    <location>
        <position position="220"/>
    </location>
    <ligand>
        <name>Mg(2+)</name>
        <dbReference type="ChEBI" id="CHEBI:18420"/>
        <label>2</label>
    </ligand>
</feature>
<feature type="binding site">
    <location>
        <position position="245"/>
    </location>
    <ligand>
        <name>Mg(2+)</name>
        <dbReference type="ChEBI" id="CHEBI:18420"/>
        <label>1</label>
    </ligand>
</feature>
<feature type="binding site">
    <location>
        <position position="255"/>
    </location>
    <ligand>
        <name>Mg(2+)</name>
        <dbReference type="ChEBI" id="CHEBI:18420"/>
        <label>2</label>
    </ligand>
</feature>
<feature type="binding site">
    <location>
        <position position="257"/>
    </location>
    <ligand>
        <name>Mg(2+)</name>
        <dbReference type="ChEBI" id="CHEBI:18420"/>
        <label>2</label>
    </ligand>
</feature>
<feature type="binding site">
    <location>
        <position position="287"/>
    </location>
    <ligand>
        <name>Mg(2+)</name>
        <dbReference type="ChEBI" id="CHEBI:18420"/>
        <label>1</label>
    </ligand>
</feature>
<feature type="strand" evidence="3">
    <location>
        <begin position="11"/>
        <end position="14"/>
    </location>
</feature>
<feature type="helix" evidence="3">
    <location>
        <begin position="15"/>
        <end position="18"/>
    </location>
</feature>
<feature type="strand" evidence="3">
    <location>
        <begin position="25"/>
        <end position="27"/>
    </location>
</feature>
<feature type="helix" evidence="3">
    <location>
        <begin position="36"/>
        <end position="46"/>
    </location>
</feature>
<feature type="strand" evidence="3">
    <location>
        <begin position="50"/>
        <end position="54"/>
    </location>
</feature>
<feature type="helix" evidence="3">
    <location>
        <begin position="55"/>
        <end position="58"/>
    </location>
</feature>
<feature type="helix" evidence="3">
    <location>
        <begin position="65"/>
        <end position="82"/>
    </location>
</feature>
<feature type="strand" evidence="3">
    <location>
        <begin position="88"/>
        <end position="90"/>
    </location>
</feature>
<feature type="strand" evidence="3">
    <location>
        <begin position="94"/>
        <end position="96"/>
    </location>
</feature>
<feature type="helix" evidence="3">
    <location>
        <begin position="97"/>
        <end position="99"/>
    </location>
</feature>
<feature type="helix" evidence="3">
    <location>
        <begin position="109"/>
        <end position="127"/>
    </location>
</feature>
<feature type="turn" evidence="3">
    <location>
        <begin position="128"/>
        <end position="130"/>
    </location>
</feature>
<feature type="strand" evidence="3">
    <location>
        <begin position="132"/>
        <end position="136"/>
    </location>
</feature>
<feature type="strand" evidence="3">
    <location>
        <begin position="142"/>
        <end position="148"/>
    </location>
</feature>
<feature type="helix" evidence="3">
    <location>
        <begin position="151"/>
        <end position="171"/>
    </location>
</feature>
<feature type="strand" evidence="3">
    <location>
        <begin position="178"/>
        <end position="180"/>
    </location>
</feature>
<feature type="strand" evidence="3">
    <location>
        <begin position="184"/>
        <end position="193"/>
    </location>
</feature>
<feature type="helix" evidence="3">
    <location>
        <begin position="196"/>
        <end position="203"/>
    </location>
</feature>
<feature type="strand" evidence="3">
    <location>
        <begin position="206"/>
        <end position="208"/>
    </location>
</feature>
<feature type="helix" evidence="3">
    <location>
        <begin position="209"/>
        <end position="211"/>
    </location>
</feature>
<feature type="helix" evidence="3">
    <location>
        <begin position="218"/>
        <end position="222"/>
    </location>
</feature>
<feature type="turn" evidence="3">
    <location>
        <begin position="223"/>
        <end position="225"/>
    </location>
</feature>
<feature type="helix" evidence="3">
    <location>
        <begin position="228"/>
        <end position="235"/>
    </location>
</feature>
<feature type="turn" evidence="3">
    <location>
        <begin position="236"/>
        <end position="239"/>
    </location>
</feature>
<feature type="strand" evidence="3">
    <location>
        <begin position="244"/>
        <end position="246"/>
    </location>
</feature>
<feature type="strand" evidence="3">
    <location>
        <begin position="251"/>
        <end position="254"/>
    </location>
</feature>
<feature type="strand" evidence="3">
    <location>
        <begin position="262"/>
        <end position="264"/>
    </location>
</feature>
<feature type="helix" evidence="3">
    <location>
        <begin position="265"/>
        <end position="277"/>
    </location>
</feature>
<feature type="strand" evidence="3">
    <location>
        <begin position="284"/>
        <end position="286"/>
    </location>
</feature>
<feature type="helix" evidence="3">
    <location>
        <begin position="296"/>
        <end position="320"/>
    </location>
</feature>
<feature type="helix" evidence="3">
    <location>
        <begin position="324"/>
        <end position="332"/>
    </location>
</feature>
<feature type="helix" evidence="3">
    <location>
        <begin position="335"/>
        <end position="338"/>
    </location>
</feature>
<feature type="turn" evidence="3">
    <location>
        <begin position="354"/>
        <end position="359"/>
    </location>
</feature>
<feature type="helix" evidence="3">
    <location>
        <begin position="362"/>
        <end position="366"/>
    </location>
</feature>
<feature type="helix" evidence="3">
    <location>
        <begin position="372"/>
        <end position="378"/>
    </location>
</feature>
<feature type="strand" evidence="3">
    <location>
        <begin position="381"/>
        <end position="386"/>
    </location>
</feature>
<comment type="function">
    <text>Involved in D-xylose catabolism.</text>
</comment>
<comment type="catalytic activity">
    <reaction>
        <text>alpha-D-xylose = alpha-D-xylulofuranose</text>
        <dbReference type="Rhea" id="RHEA:22816"/>
        <dbReference type="ChEBI" id="CHEBI:28518"/>
        <dbReference type="ChEBI" id="CHEBI:188998"/>
        <dbReference type="EC" id="5.3.1.5"/>
    </reaction>
</comment>
<comment type="cofactor">
    <cofactor evidence="1">
        <name>Mg(2+)</name>
        <dbReference type="ChEBI" id="CHEBI:18420"/>
    </cofactor>
    <text evidence="1">Binds 2 magnesium ions per subunit.</text>
</comment>
<comment type="subunit">
    <text>Homotetramer.</text>
</comment>
<comment type="subcellular location">
    <subcellularLocation>
        <location>Cytoplasm</location>
    </subcellularLocation>
</comment>
<comment type="similarity">
    <text evidence="2">Belongs to the xylose isomerase family.</text>
</comment>
<proteinExistence type="evidence at protein level"/>
<sequence length="388" mass="42772">MSFQPTPEDRFTFGLWTVGWQGRDPFGDATRPALDPVETVQRLAELGAYGVTFHDDDLIPFGSSDTERESHIKRFRQALDATGMTVPMATTNLFTHPVFKDGGFTANDRDVRRYALRKTIGNIDLAAELGAKTYVAWGGREGAESGGAKDVRDALDRMKEAFDLLGEYVTAQGYDLRFAIEPKPNEPRGDILLPTVGHALAFIERLERPELYGVNPEVGHEQMAGLNFPHGIAQALWAGKLFHIDLNGQSGIKYDQDLRFGAGDLRAAFWLVDLLETAGYEGPRHFDFKPPRTEDFDGVWASAAGCMRNYLILKDRAAAFRADPEVQEALRAARLDQLAQPTAADGLDALLADRAAFEDFDVDAAAARGMAFEHLDQLAMDHLLGARG</sequence>
<evidence type="ECO:0000250" key="1"/>
<evidence type="ECO:0000305" key="2"/>
<evidence type="ECO:0007829" key="3">
    <source>
        <dbReference type="PDB" id="1DXI"/>
    </source>
</evidence>
<dbReference type="EC" id="5.3.1.5"/>
<dbReference type="EMBL" id="A10243">
    <property type="protein sequence ID" value="CAA00885.1"/>
    <property type="molecule type" value="Unassigned_DNA"/>
</dbReference>
<dbReference type="PDB" id="1DXI">
    <property type="method" value="X-ray"/>
    <property type="resolution" value="2.60 A"/>
    <property type="chains" value="A/B=1-388"/>
</dbReference>
<dbReference type="PDBsum" id="1DXI"/>
<dbReference type="SMR" id="P37031"/>
<dbReference type="EvolutionaryTrace" id="P37031"/>
<dbReference type="GO" id="GO:0005737">
    <property type="term" value="C:cytoplasm"/>
    <property type="evidence" value="ECO:0007669"/>
    <property type="project" value="UniProtKB-SubCell"/>
</dbReference>
<dbReference type="GO" id="GO:0000287">
    <property type="term" value="F:magnesium ion binding"/>
    <property type="evidence" value="ECO:0007669"/>
    <property type="project" value="UniProtKB-UniRule"/>
</dbReference>
<dbReference type="GO" id="GO:0009045">
    <property type="term" value="F:xylose isomerase activity"/>
    <property type="evidence" value="ECO:0007669"/>
    <property type="project" value="UniProtKB-UniRule"/>
</dbReference>
<dbReference type="GO" id="GO:0042732">
    <property type="term" value="P:D-xylose metabolic process"/>
    <property type="evidence" value="ECO:0007669"/>
    <property type="project" value="UniProtKB-UniRule"/>
</dbReference>
<dbReference type="FunFam" id="3.20.20.150:FF:000009">
    <property type="entry name" value="Xylose isomerase"/>
    <property type="match status" value="1"/>
</dbReference>
<dbReference type="Gene3D" id="3.20.20.150">
    <property type="entry name" value="Divalent-metal-dependent TIM barrel enzymes"/>
    <property type="match status" value="1"/>
</dbReference>
<dbReference type="HAMAP" id="MF_00455">
    <property type="entry name" value="Xylose_isom_A"/>
    <property type="match status" value="1"/>
</dbReference>
<dbReference type="InterPro" id="IPR036237">
    <property type="entry name" value="Xyl_isomerase-like_sf"/>
</dbReference>
<dbReference type="InterPro" id="IPR013022">
    <property type="entry name" value="Xyl_isomerase-like_TIM-brl"/>
</dbReference>
<dbReference type="InterPro" id="IPR013453">
    <property type="entry name" value="XylA_actinobac"/>
</dbReference>
<dbReference type="InterPro" id="IPR001998">
    <property type="entry name" value="Xylose_isomerase"/>
</dbReference>
<dbReference type="NCBIfam" id="TIGR02631">
    <property type="entry name" value="xylA_Arthro"/>
    <property type="match status" value="1"/>
</dbReference>
<dbReference type="PANTHER" id="PTHR48408">
    <property type="match status" value="1"/>
</dbReference>
<dbReference type="PANTHER" id="PTHR48408:SF1">
    <property type="entry name" value="XYLOSE ISOMERASE"/>
    <property type="match status" value="1"/>
</dbReference>
<dbReference type="Pfam" id="PF01261">
    <property type="entry name" value="AP_endonuc_2"/>
    <property type="match status" value="1"/>
</dbReference>
<dbReference type="PRINTS" id="PR00688">
    <property type="entry name" value="XYLOSISMRASE"/>
</dbReference>
<dbReference type="SUPFAM" id="SSF51658">
    <property type="entry name" value="Xylose isomerase-like"/>
    <property type="match status" value="1"/>
</dbReference>
<dbReference type="PROSITE" id="PS51415">
    <property type="entry name" value="XYLOSE_ISOMERASE"/>
    <property type="match status" value="1"/>
</dbReference>
<gene>
    <name type="primary">xylA</name>
</gene>
<organism>
    <name type="scientific">Streptomyces murinus</name>
    <dbReference type="NCBI Taxonomy" id="33900"/>
    <lineage>
        <taxon>Bacteria</taxon>
        <taxon>Bacillati</taxon>
        <taxon>Actinomycetota</taxon>
        <taxon>Actinomycetes</taxon>
        <taxon>Kitasatosporales</taxon>
        <taxon>Streptomycetaceae</taxon>
        <taxon>Streptomyces</taxon>
    </lineage>
</organism>
<keyword id="KW-0002">3D-structure</keyword>
<keyword id="KW-0119">Carbohydrate metabolism</keyword>
<keyword id="KW-0963">Cytoplasm</keyword>
<keyword id="KW-0413">Isomerase</keyword>
<keyword id="KW-0460">Magnesium</keyword>
<keyword id="KW-0479">Metal-binding</keyword>
<keyword id="KW-0859">Xylose metabolism</keyword>